<protein>
    <recommendedName>
        <fullName evidence="1">NADH-quinone oxidoreductase subunit K</fullName>
        <ecNumber evidence="1">7.1.1.-</ecNumber>
    </recommendedName>
    <alternativeName>
        <fullName evidence="1">NADH dehydrogenase I subunit K</fullName>
    </alternativeName>
    <alternativeName>
        <fullName evidence="1">NDH-1 subunit K</fullName>
    </alternativeName>
</protein>
<sequence>MSPMYYLYLSAVLFTLGAVGVLLRRNAIIVFMCVELMLNAANLALVTFSRINGNLDGQVMAFFVMVVAAAEVVVGLAIIVAIFRTRRSASVDDANLLKY</sequence>
<reference key="1">
    <citation type="journal article" date="2009" name="Genome Res.">
        <title>Complete genome of the cellulolytic thermophile Acidothermus cellulolyticus 11B provides insights into its ecophysiological and evolutionary adaptations.</title>
        <authorList>
            <person name="Barabote R.D."/>
            <person name="Xie G."/>
            <person name="Leu D.H."/>
            <person name="Normand P."/>
            <person name="Necsulea A."/>
            <person name="Daubin V."/>
            <person name="Medigue C."/>
            <person name="Adney W.S."/>
            <person name="Xu X.C."/>
            <person name="Lapidus A."/>
            <person name="Parales R.E."/>
            <person name="Detter C."/>
            <person name="Pujic P."/>
            <person name="Bruce D."/>
            <person name="Lavire C."/>
            <person name="Challacombe J.F."/>
            <person name="Brettin T.S."/>
            <person name="Berry A.M."/>
        </authorList>
    </citation>
    <scope>NUCLEOTIDE SEQUENCE [LARGE SCALE GENOMIC DNA]</scope>
    <source>
        <strain>ATCC 43068 / DSM 8971 / 11B</strain>
    </source>
</reference>
<dbReference type="EC" id="7.1.1.-" evidence="1"/>
<dbReference type="EMBL" id="CP000481">
    <property type="protein sequence ID" value="ABK52051.1"/>
    <property type="molecule type" value="Genomic_DNA"/>
</dbReference>
<dbReference type="RefSeq" id="WP_011719114.1">
    <property type="nucleotide sequence ID" value="NC_008578.1"/>
</dbReference>
<dbReference type="SMR" id="A0LRJ1"/>
<dbReference type="FunCoup" id="A0LRJ1">
    <property type="interactions" value="51"/>
</dbReference>
<dbReference type="STRING" id="351607.Acel_0277"/>
<dbReference type="KEGG" id="ace:Acel_0277"/>
<dbReference type="eggNOG" id="COG0713">
    <property type="taxonomic scope" value="Bacteria"/>
</dbReference>
<dbReference type="HOGENOM" id="CLU_144724_0_0_11"/>
<dbReference type="InParanoid" id="A0LRJ1"/>
<dbReference type="OrthoDB" id="9810120at2"/>
<dbReference type="Proteomes" id="UP000008221">
    <property type="component" value="Chromosome"/>
</dbReference>
<dbReference type="GO" id="GO:0030964">
    <property type="term" value="C:NADH dehydrogenase complex"/>
    <property type="evidence" value="ECO:0007669"/>
    <property type="project" value="TreeGrafter"/>
</dbReference>
<dbReference type="GO" id="GO:0005886">
    <property type="term" value="C:plasma membrane"/>
    <property type="evidence" value="ECO:0007669"/>
    <property type="project" value="UniProtKB-SubCell"/>
</dbReference>
<dbReference type="GO" id="GO:0050136">
    <property type="term" value="F:NADH:ubiquinone reductase (non-electrogenic) activity"/>
    <property type="evidence" value="ECO:0007669"/>
    <property type="project" value="UniProtKB-UniRule"/>
</dbReference>
<dbReference type="GO" id="GO:0048038">
    <property type="term" value="F:quinone binding"/>
    <property type="evidence" value="ECO:0007669"/>
    <property type="project" value="UniProtKB-KW"/>
</dbReference>
<dbReference type="GO" id="GO:0042773">
    <property type="term" value="P:ATP synthesis coupled electron transport"/>
    <property type="evidence" value="ECO:0007669"/>
    <property type="project" value="InterPro"/>
</dbReference>
<dbReference type="FunFam" id="1.10.287.3510:FF:000001">
    <property type="entry name" value="NADH-quinone oxidoreductase subunit K"/>
    <property type="match status" value="1"/>
</dbReference>
<dbReference type="Gene3D" id="1.10.287.3510">
    <property type="match status" value="1"/>
</dbReference>
<dbReference type="HAMAP" id="MF_01456">
    <property type="entry name" value="NDH1_NuoK"/>
    <property type="match status" value="1"/>
</dbReference>
<dbReference type="InterPro" id="IPR001133">
    <property type="entry name" value="NADH_UbQ_OxRdtase_chain4L/K"/>
</dbReference>
<dbReference type="InterPro" id="IPR039428">
    <property type="entry name" value="NUOK/Mnh_C1-like"/>
</dbReference>
<dbReference type="NCBIfam" id="NF004320">
    <property type="entry name" value="PRK05715.1-2"/>
    <property type="match status" value="1"/>
</dbReference>
<dbReference type="NCBIfam" id="NF004321">
    <property type="entry name" value="PRK05715.1-3"/>
    <property type="match status" value="1"/>
</dbReference>
<dbReference type="NCBIfam" id="NF004323">
    <property type="entry name" value="PRK05715.1-5"/>
    <property type="match status" value="1"/>
</dbReference>
<dbReference type="PANTHER" id="PTHR11434:SF21">
    <property type="entry name" value="NADH DEHYDROGENASE SUBUNIT 4L-RELATED"/>
    <property type="match status" value="1"/>
</dbReference>
<dbReference type="PANTHER" id="PTHR11434">
    <property type="entry name" value="NADH-UBIQUINONE OXIDOREDUCTASE SUBUNIT ND4L"/>
    <property type="match status" value="1"/>
</dbReference>
<dbReference type="Pfam" id="PF00420">
    <property type="entry name" value="Oxidored_q2"/>
    <property type="match status" value="1"/>
</dbReference>
<evidence type="ECO:0000255" key="1">
    <source>
        <dbReference type="HAMAP-Rule" id="MF_01456"/>
    </source>
</evidence>
<keyword id="KW-1003">Cell membrane</keyword>
<keyword id="KW-0472">Membrane</keyword>
<keyword id="KW-0520">NAD</keyword>
<keyword id="KW-0874">Quinone</keyword>
<keyword id="KW-1185">Reference proteome</keyword>
<keyword id="KW-1278">Translocase</keyword>
<keyword id="KW-0812">Transmembrane</keyword>
<keyword id="KW-1133">Transmembrane helix</keyword>
<keyword id="KW-0813">Transport</keyword>
<feature type="chain" id="PRO_0000389911" description="NADH-quinone oxidoreductase subunit K">
    <location>
        <begin position="1"/>
        <end position="99"/>
    </location>
</feature>
<feature type="transmembrane region" description="Helical" evidence="1">
    <location>
        <begin position="3"/>
        <end position="23"/>
    </location>
</feature>
<feature type="transmembrane region" description="Helical" evidence="1">
    <location>
        <begin position="28"/>
        <end position="48"/>
    </location>
</feature>
<feature type="transmembrane region" description="Helical" evidence="1">
    <location>
        <begin position="62"/>
        <end position="82"/>
    </location>
</feature>
<proteinExistence type="inferred from homology"/>
<organism>
    <name type="scientific">Acidothermus cellulolyticus (strain ATCC 43068 / DSM 8971 / 11B)</name>
    <dbReference type="NCBI Taxonomy" id="351607"/>
    <lineage>
        <taxon>Bacteria</taxon>
        <taxon>Bacillati</taxon>
        <taxon>Actinomycetota</taxon>
        <taxon>Actinomycetes</taxon>
        <taxon>Acidothermales</taxon>
        <taxon>Acidothermaceae</taxon>
        <taxon>Acidothermus</taxon>
    </lineage>
</organism>
<comment type="function">
    <text evidence="1">NDH-1 shuttles electrons from NADH, via FMN and iron-sulfur (Fe-S) centers, to quinones in the respiratory chain. The immediate electron acceptor for the enzyme in this species is believed to be a menaquinone. Couples the redox reaction to proton translocation (for every two electrons transferred, four hydrogen ions are translocated across the cytoplasmic membrane), and thus conserves the redox energy in a proton gradient.</text>
</comment>
<comment type="catalytic activity">
    <reaction evidence="1">
        <text>a quinone + NADH + 5 H(+)(in) = a quinol + NAD(+) + 4 H(+)(out)</text>
        <dbReference type="Rhea" id="RHEA:57888"/>
        <dbReference type="ChEBI" id="CHEBI:15378"/>
        <dbReference type="ChEBI" id="CHEBI:24646"/>
        <dbReference type="ChEBI" id="CHEBI:57540"/>
        <dbReference type="ChEBI" id="CHEBI:57945"/>
        <dbReference type="ChEBI" id="CHEBI:132124"/>
    </reaction>
</comment>
<comment type="subunit">
    <text evidence="1">NDH-1 is composed of 14 different subunits. Subunits NuoA, H, J, K, L, M, N constitute the membrane sector of the complex.</text>
</comment>
<comment type="subcellular location">
    <subcellularLocation>
        <location evidence="1">Cell membrane</location>
        <topology evidence="1">Multi-pass membrane protein</topology>
    </subcellularLocation>
</comment>
<comment type="similarity">
    <text evidence="1">Belongs to the complex I subunit 4L family.</text>
</comment>
<name>NUOK_ACIC1</name>
<gene>
    <name evidence="1" type="primary">nuoK</name>
    <name type="ordered locus">Acel_0277</name>
</gene>
<accession>A0LRJ1</accession>